<name>RS21_LISMC</name>
<proteinExistence type="inferred from homology"/>
<organism>
    <name type="scientific">Listeria monocytogenes serotype 4b (strain CLIP80459)</name>
    <dbReference type="NCBI Taxonomy" id="568819"/>
    <lineage>
        <taxon>Bacteria</taxon>
        <taxon>Bacillati</taxon>
        <taxon>Bacillota</taxon>
        <taxon>Bacilli</taxon>
        <taxon>Bacillales</taxon>
        <taxon>Listeriaceae</taxon>
        <taxon>Listeria</taxon>
    </lineage>
</organism>
<keyword id="KW-0687">Ribonucleoprotein</keyword>
<keyword id="KW-0689">Ribosomal protein</keyword>
<sequence length="57" mass="6846">MSKTVVRKNESLEDALRRFKRTVSKSGTLQESRKREFYEKPSVKRKKKSEAARKRKF</sequence>
<reference key="1">
    <citation type="journal article" date="2012" name="BMC Genomics">
        <title>Comparative genomics and transcriptomics of lineages I, II, and III strains of Listeria monocytogenes.</title>
        <authorList>
            <person name="Hain T."/>
            <person name="Ghai R."/>
            <person name="Billion A."/>
            <person name="Kuenne C.T."/>
            <person name="Steinweg C."/>
            <person name="Izar B."/>
            <person name="Mohamed W."/>
            <person name="Mraheil M."/>
            <person name="Domann E."/>
            <person name="Schaffrath S."/>
            <person name="Karst U."/>
            <person name="Goesmann A."/>
            <person name="Oehm S."/>
            <person name="Puhler A."/>
            <person name="Merkl R."/>
            <person name="Vorwerk S."/>
            <person name="Glaser P."/>
            <person name="Garrido P."/>
            <person name="Rusniok C."/>
            <person name="Buchrieser C."/>
            <person name="Goebel W."/>
            <person name="Chakraborty T."/>
        </authorList>
    </citation>
    <scope>NUCLEOTIDE SEQUENCE [LARGE SCALE GENOMIC DNA]</scope>
    <source>
        <strain>CLIP80459</strain>
    </source>
</reference>
<protein>
    <recommendedName>
        <fullName evidence="1">Small ribosomal subunit protein bS21</fullName>
    </recommendedName>
    <alternativeName>
        <fullName evidence="3">30S ribosomal protein S21</fullName>
    </alternativeName>
</protein>
<evidence type="ECO:0000255" key="1">
    <source>
        <dbReference type="HAMAP-Rule" id="MF_00358"/>
    </source>
</evidence>
<evidence type="ECO:0000256" key="2">
    <source>
        <dbReference type="SAM" id="MobiDB-lite"/>
    </source>
</evidence>
<evidence type="ECO:0000305" key="3"/>
<comment type="similarity">
    <text evidence="1">Belongs to the bacterial ribosomal protein bS21 family.</text>
</comment>
<dbReference type="EMBL" id="FM242711">
    <property type="protein sequence ID" value="CAS05241.1"/>
    <property type="molecule type" value="Genomic_DNA"/>
</dbReference>
<dbReference type="RefSeq" id="WP_003719762.1">
    <property type="nucleotide sequence ID" value="NC_012488.1"/>
</dbReference>
<dbReference type="SMR" id="C1KVB6"/>
<dbReference type="GeneID" id="93239346"/>
<dbReference type="KEGG" id="lmc:Lm4b_01479"/>
<dbReference type="HOGENOM" id="CLU_159258_3_2_9"/>
<dbReference type="GO" id="GO:1990904">
    <property type="term" value="C:ribonucleoprotein complex"/>
    <property type="evidence" value="ECO:0007669"/>
    <property type="project" value="UniProtKB-KW"/>
</dbReference>
<dbReference type="GO" id="GO:0005840">
    <property type="term" value="C:ribosome"/>
    <property type="evidence" value="ECO:0007669"/>
    <property type="project" value="UniProtKB-KW"/>
</dbReference>
<dbReference type="GO" id="GO:0003735">
    <property type="term" value="F:structural constituent of ribosome"/>
    <property type="evidence" value="ECO:0007669"/>
    <property type="project" value="InterPro"/>
</dbReference>
<dbReference type="GO" id="GO:0006412">
    <property type="term" value="P:translation"/>
    <property type="evidence" value="ECO:0007669"/>
    <property type="project" value="UniProtKB-UniRule"/>
</dbReference>
<dbReference type="Gene3D" id="1.20.5.1150">
    <property type="entry name" value="Ribosomal protein S8"/>
    <property type="match status" value="1"/>
</dbReference>
<dbReference type="HAMAP" id="MF_00358">
    <property type="entry name" value="Ribosomal_bS21"/>
    <property type="match status" value="1"/>
</dbReference>
<dbReference type="InterPro" id="IPR001911">
    <property type="entry name" value="Ribosomal_bS21"/>
</dbReference>
<dbReference type="InterPro" id="IPR018278">
    <property type="entry name" value="Ribosomal_bS21_CS"/>
</dbReference>
<dbReference type="InterPro" id="IPR038380">
    <property type="entry name" value="Ribosomal_bS21_sf"/>
</dbReference>
<dbReference type="NCBIfam" id="TIGR00030">
    <property type="entry name" value="S21p"/>
    <property type="match status" value="1"/>
</dbReference>
<dbReference type="PANTHER" id="PTHR21109">
    <property type="entry name" value="MITOCHONDRIAL 28S RIBOSOMAL PROTEIN S21"/>
    <property type="match status" value="1"/>
</dbReference>
<dbReference type="PANTHER" id="PTHR21109:SF22">
    <property type="entry name" value="SMALL RIBOSOMAL SUBUNIT PROTEIN BS21"/>
    <property type="match status" value="1"/>
</dbReference>
<dbReference type="Pfam" id="PF01165">
    <property type="entry name" value="Ribosomal_S21"/>
    <property type="match status" value="1"/>
</dbReference>
<dbReference type="PRINTS" id="PR00976">
    <property type="entry name" value="RIBOSOMALS21"/>
</dbReference>
<dbReference type="PROSITE" id="PS01181">
    <property type="entry name" value="RIBOSOMAL_S21"/>
    <property type="match status" value="1"/>
</dbReference>
<gene>
    <name evidence="1" type="primary">rpsU</name>
    <name type="ordered locus">Lm4b_01479</name>
</gene>
<feature type="chain" id="PRO_1000205373" description="Small ribosomal subunit protein bS21">
    <location>
        <begin position="1"/>
        <end position="57"/>
    </location>
</feature>
<feature type="region of interest" description="Disordered" evidence="2">
    <location>
        <begin position="24"/>
        <end position="57"/>
    </location>
</feature>
<feature type="compositionally biased region" description="Basic and acidic residues" evidence="2">
    <location>
        <begin position="31"/>
        <end position="42"/>
    </location>
</feature>
<feature type="compositionally biased region" description="Basic residues" evidence="2">
    <location>
        <begin position="43"/>
        <end position="57"/>
    </location>
</feature>
<accession>C1KVB6</accession>